<sequence>MNGTEGPNFYVPMSNATGVVRSPFEYPQYYLAEPWAFSILAAYMFFLIITGFPINFLTLYVTIEHKKLRTPLNYILLNLAVADLFMVFGGFTTTMYTSMHGYFVFGETGCNLEGYFATLGGEISLWSLVVLAIERWVVVCKPISNFRFGENHAIMGLTLTWVMANACAMPPLFGWSRYIPEGLQCSCGIDYYTLKPEVNNESFVIYMFLVHFTIPLTIISFCYGRLVCAVKEAAAQQQESETTQRAEREVTRMVVIMVISFLVCWIPYASVAWYIFTHQGSTFGPIFMTVPSFFAKSSSIYNPMIYICMNKQFRNCMITTLFCGKNPFEGEEEGSTTKTEASAVSSVSPA</sequence>
<evidence type="ECO:0000250" key="1"/>
<evidence type="ECO:0000255" key="2"/>
<evidence type="ECO:0000255" key="3">
    <source>
        <dbReference type="PROSITE-ProRule" id="PRU00521"/>
    </source>
</evidence>
<evidence type="ECO:0000256" key="4">
    <source>
        <dbReference type="SAM" id="MobiDB-lite"/>
    </source>
</evidence>
<evidence type="ECO:0000269" key="5">
    <source>
    </source>
</evidence>
<name>OPSB_CONCO</name>
<reference key="1">
    <citation type="journal article" date="1996" name="Proc. R. Soc. B">
        <title>Absorbance spectra and molecular structure of the blue-sensitive rod visual pigment in the conger eel (Conger conger).</title>
        <authorList>
            <person name="Archer S."/>
            <person name="Hirano J."/>
        </authorList>
    </citation>
    <scope>NUCLEOTIDE SEQUENCE [MRNA]</scope>
    <scope>BIOPHYSICOCHEMICAL PROPERTIES</scope>
</reference>
<protein>
    <recommendedName>
        <fullName>Blue-sensitive opsin</fullName>
    </recommendedName>
    <alternativeName>
        <fullName>Blue cone photoreceptor pigment</fullName>
    </alternativeName>
</protein>
<organism>
    <name type="scientific">Conger conger</name>
    <name type="common">Conger eel</name>
    <name type="synonym">Muraena conger</name>
    <dbReference type="NCBI Taxonomy" id="82655"/>
    <lineage>
        <taxon>Eukaryota</taxon>
        <taxon>Metazoa</taxon>
        <taxon>Chordata</taxon>
        <taxon>Craniata</taxon>
        <taxon>Vertebrata</taxon>
        <taxon>Euteleostomi</taxon>
        <taxon>Actinopterygii</taxon>
        <taxon>Neopterygii</taxon>
        <taxon>Teleostei</taxon>
        <taxon>Anguilliformes</taxon>
        <taxon>Congridae</taxon>
        <taxon>Conger</taxon>
    </lineage>
</organism>
<accession>O13227</accession>
<dbReference type="EMBL" id="S82619">
    <property type="protein sequence ID" value="AAB37721.1"/>
    <property type="molecule type" value="mRNA"/>
</dbReference>
<dbReference type="RefSeq" id="XP_061075158.1">
    <property type="nucleotide sequence ID" value="XM_061219174.1"/>
</dbReference>
<dbReference type="SMR" id="O13227"/>
<dbReference type="GeneID" id="133109691"/>
<dbReference type="GO" id="GO:0016020">
    <property type="term" value="C:membrane"/>
    <property type="evidence" value="ECO:0007669"/>
    <property type="project" value="UniProtKB-SubCell"/>
</dbReference>
<dbReference type="GO" id="GO:0004930">
    <property type="term" value="F:G protein-coupled receptor activity"/>
    <property type="evidence" value="ECO:0007669"/>
    <property type="project" value="UniProtKB-KW"/>
</dbReference>
<dbReference type="GO" id="GO:0009881">
    <property type="term" value="F:photoreceptor activity"/>
    <property type="evidence" value="ECO:0007669"/>
    <property type="project" value="UniProtKB-KW"/>
</dbReference>
<dbReference type="GO" id="GO:0007602">
    <property type="term" value="P:phototransduction"/>
    <property type="evidence" value="ECO:0007669"/>
    <property type="project" value="UniProtKB-KW"/>
</dbReference>
<dbReference type="GO" id="GO:0007601">
    <property type="term" value="P:visual perception"/>
    <property type="evidence" value="ECO:0007669"/>
    <property type="project" value="UniProtKB-KW"/>
</dbReference>
<dbReference type="CDD" id="cd15080">
    <property type="entry name" value="7tmA_MWS_opsin"/>
    <property type="match status" value="1"/>
</dbReference>
<dbReference type="FunFam" id="1.20.1070.10:FF:000018">
    <property type="entry name" value="Rhodopsin"/>
    <property type="match status" value="1"/>
</dbReference>
<dbReference type="Gene3D" id="1.20.1070.10">
    <property type="entry name" value="Rhodopsin 7-helix transmembrane proteins"/>
    <property type="match status" value="1"/>
</dbReference>
<dbReference type="InterPro" id="IPR050125">
    <property type="entry name" value="GPCR_opsins"/>
</dbReference>
<dbReference type="InterPro" id="IPR000276">
    <property type="entry name" value="GPCR_Rhodpsn"/>
</dbReference>
<dbReference type="InterPro" id="IPR017452">
    <property type="entry name" value="GPCR_Rhodpsn_7TM"/>
</dbReference>
<dbReference type="InterPro" id="IPR001760">
    <property type="entry name" value="Opsin"/>
</dbReference>
<dbReference type="InterPro" id="IPR027430">
    <property type="entry name" value="Retinal_BS"/>
</dbReference>
<dbReference type="InterPro" id="IPR000732">
    <property type="entry name" value="Rhodopsin"/>
</dbReference>
<dbReference type="InterPro" id="IPR019477">
    <property type="entry name" value="Rhodopsin_N"/>
</dbReference>
<dbReference type="PANTHER" id="PTHR24240">
    <property type="entry name" value="OPSIN"/>
    <property type="match status" value="1"/>
</dbReference>
<dbReference type="Pfam" id="PF00001">
    <property type="entry name" value="7tm_1"/>
    <property type="match status" value="1"/>
</dbReference>
<dbReference type="Pfam" id="PF10413">
    <property type="entry name" value="Rhodopsin_N"/>
    <property type="match status" value="1"/>
</dbReference>
<dbReference type="PRINTS" id="PR00237">
    <property type="entry name" value="GPCRRHODOPSN"/>
</dbReference>
<dbReference type="PRINTS" id="PR00238">
    <property type="entry name" value="OPSIN"/>
</dbReference>
<dbReference type="PRINTS" id="PR00579">
    <property type="entry name" value="RHODOPSIN"/>
</dbReference>
<dbReference type="SUPFAM" id="SSF81321">
    <property type="entry name" value="Family A G protein-coupled receptor-like"/>
    <property type="match status" value="1"/>
</dbReference>
<dbReference type="PROSITE" id="PS00237">
    <property type="entry name" value="G_PROTEIN_RECEP_F1_1"/>
    <property type="match status" value="1"/>
</dbReference>
<dbReference type="PROSITE" id="PS50262">
    <property type="entry name" value="G_PROTEIN_RECEP_F1_2"/>
    <property type="match status" value="1"/>
</dbReference>
<dbReference type="PROSITE" id="PS00238">
    <property type="entry name" value="OPSIN"/>
    <property type="match status" value="1"/>
</dbReference>
<proteinExistence type="evidence at protein level"/>
<comment type="function">
    <text>Visual pigments are the light-absorbing molecules that mediate vision. They consist of an apoprotein, opsin, covalently linked to cis-retinal.</text>
</comment>
<comment type="biophysicochemical properties">
    <absorption>
        <max evidence="5">~487 nm</max>
    </absorption>
</comment>
<comment type="subcellular location">
    <subcellularLocation>
        <location>Membrane</location>
        <topology>Multi-pass membrane protein</topology>
    </subcellularLocation>
</comment>
<comment type="tissue specificity">
    <text>Rod shaped photoreceptor cells which mediates vision in dim light.</text>
</comment>
<comment type="PTM">
    <text>Phosphorylated on some or all of the serine and threonine residues present in the C-terminal region.</text>
</comment>
<comment type="similarity">
    <text evidence="3">Belongs to the G-protein coupled receptor 1 family. Opsin subfamily.</text>
</comment>
<keyword id="KW-0157">Chromophore</keyword>
<keyword id="KW-1015">Disulfide bond</keyword>
<keyword id="KW-0297">G-protein coupled receptor</keyword>
<keyword id="KW-0325">Glycoprotein</keyword>
<keyword id="KW-0472">Membrane</keyword>
<keyword id="KW-0597">Phosphoprotein</keyword>
<keyword id="KW-0600">Photoreceptor protein</keyword>
<keyword id="KW-0675">Receptor</keyword>
<keyword id="KW-0681">Retinal protein</keyword>
<keyword id="KW-0716">Sensory transduction</keyword>
<keyword id="KW-0807">Transducer</keyword>
<keyword id="KW-0812">Transmembrane</keyword>
<keyword id="KW-1133">Transmembrane helix</keyword>
<keyword id="KW-0844">Vision</keyword>
<feature type="chain" id="PRO_0000197757" description="Blue-sensitive opsin">
    <location>
        <begin position="1"/>
        <end position="350"/>
    </location>
</feature>
<feature type="topological domain" description="Extracellular" evidence="2">
    <location>
        <begin position="1"/>
        <end position="36"/>
    </location>
</feature>
<feature type="transmembrane region" description="Helical; Name=1" evidence="2">
    <location>
        <begin position="37"/>
        <end position="61"/>
    </location>
</feature>
<feature type="topological domain" description="Cytoplasmic" evidence="2">
    <location>
        <begin position="62"/>
        <end position="73"/>
    </location>
</feature>
<feature type="transmembrane region" description="Helical; Name=2" evidence="2">
    <location>
        <begin position="74"/>
        <end position="98"/>
    </location>
</feature>
<feature type="topological domain" description="Extracellular" evidence="2">
    <location>
        <begin position="99"/>
        <end position="113"/>
    </location>
</feature>
<feature type="transmembrane region" description="Helical; Name=3" evidence="2">
    <location>
        <begin position="114"/>
        <end position="133"/>
    </location>
</feature>
<feature type="topological domain" description="Cytoplasmic" evidence="2">
    <location>
        <begin position="134"/>
        <end position="152"/>
    </location>
</feature>
<feature type="transmembrane region" description="Helical; Name=4" evidence="2">
    <location>
        <begin position="153"/>
        <end position="176"/>
    </location>
</feature>
<feature type="topological domain" description="Extracellular" evidence="2">
    <location>
        <begin position="177"/>
        <end position="202"/>
    </location>
</feature>
<feature type="transmembrane region" description="Helical; Name=5" evidence="2">
    <location>
        <begin position="203"/>
        <end position="230"/>
    </location>
</feature>
<feature type="topological domain" description="Cytoplasmic" evidence="2">
    <location>
        <begin position="231"/>
        <end position="252"/>
    </location>
</feature>
<feature type="transmembrane region" description="Helical; Name=6" evidence="2">
    <location>
        <begin position="253"/>
        <end position="276"/>
    </location>
</feature>
<feature type="topological domain" description="Extracellular" evidence="2">
    <location>
        <begin position="277"/>
        <end position="284"/>
    </location>
</feature>
<feature type="transmembrane region" description="Helical; Name=7" evidence="2">
    <location>
        <begin position="285"/>
        <end position="309"/>
    </location>
</feature>
<feature type="topological domain" description="Cytoplasmic" evidence="2">
    <location>
        <begin position="310"/>
        <end position="350"/>
    </location>
</feature>
<feature type="region of interest" description="Disordered" evidence="4">
    <location>
        <begin position="330"/>
        <end position="350"/>
    </location>
</feature>
<feature type="modified residue" description="N6-(retinylidene)lysine" evidence="1">
    <location>
        <position position="296"/>
    </location>
</feature>
<feature type="glycosylation site" description="N-linked (GlcNAc...) asparagine" evidence="2">
    <location>
        <position position="2"/>
    </location>
</feature>
<feature type="glycosylation site" description="N-linked (GlcNAc...) asparagine" evidence="2">
    <location>
        <position position="15"/>
    </location>
</feature>
<feature type="glycosylation site" description="N-linked (GlcNAc...) asparagine" evidence="2">
    <location>
        <position position="200"/>
    </location>
</feature>
<feature type="disulfide bond" evidence="3">
    <location>
        <begin position="110"/>
        <end position="187"/>
    </location>
</feature>